<name>VAC14_RAT</name>
<sequence>MNPEKDFAPLTPNIVRALNDKLYEKRKVAALEIEKLVRDFVAQNNTVQIKHVIQTLSQEFALSQHPHSRKGGLIGLAACSIALGKDSGLYLKELIEPVLTCFNDADSRLRYYACEALYNIVKVARGAVLPHFNVLFDGLSKLAADPDPNVKSGSELLDRLLKDIVTESSKFDLVGFIPLLRERIYSNNQYARQFIISWILVLVSVPDINLLDYLPEILDGLFQILGDNGKEIRKMCEVVLGEFLKEIKKNPSSVKFAEMANILVIHCQTTDDLIQLTAMCWMREFIQLAGRVMLPYSSGILTAVLPCLAYDDRKKSIKEVANVCNQSLMKLVTPEDDEPDEPKSVAQKQTEPNPEDSLPKQEGTASGGASGPCDSSFGSGISVFTSASTDRAPVTLHLDGIVQVLNCHLSDTTIGMMTRIAVLKWLYHLYIKTPRKMFRHTDSLFPILLQTLSDESDEVVLKDLEVLAEIASSPAGQTDDPGAPDGPDLQVNHSELQVPTSGRANLLNPPNTKGLECSPSTPTMNSYFYKFMINLLQTFSSERKLLEARGPFIIRQLCLLLNAENIFHSMADILLREEDLKFASTMVHTLNTILLTSTELFQLRNQLKDLKTLESQNLFCCLYRSWCHNPVTTVSLCFLTQNYRHAYDLIQKFGDLEVTVDFLTEVDKLVQLIECPIFTYLRLQLLDVKNNPYLMKALYGLLMLLPQSSAFQLLSHRLQCVPNPELLQTEDCLKAAPKSQKGDSPSIDYTELLQHFEKVQKQHLEVRHQRSGRGDHLDRRVVL</sequence>
<gene>
    <name type="primary">Vac14</name>
</gene>
<evidence type="ECO:0000250" key="1">
    <source>
        <dbReference type="UniProtKB" id="Q08AM6"/>
    </source>
</evidence>
<evidence type="ECO:0000256" key="2">
    <source>
        <dbReference type="SAM" id="MobiDB-lite"/>
    </source>
</evidence>
<evidence type="ECO:0000269" key="3">
    <source>
    </source>
</evidence>
<evidence type="ECO:0000305" key="4"/>
<dbReference type="EMBL" id="AY220476">
    <property type="protein sequence ID" value="AAO48767.1"/>
    <property type="molecule type" value="mRNA"/>
</dbReference>
<dbReference type="RefSeq" id="NP_808791.1">
    <property type="nucleotide sequence ID" value="NM_177930.3"/>
</dbReference>
<dbReference type="SMR" id="Q80W92"/>
<dbReference type="BioGRID" id="258827">
    <property type="interactions" value="1"/>
</dbReference>
<dbReference type="FunCoup" id="Q80W92">
    <property type="interactions" value="3456"/>
</dbReference>
<dbReference type="IntAct" id="Q80W92">
    <property type="interactions" value="4"/>
</dbReference>
<dbReference type="MINT" id="Q80W92"/>
<dbReference type="STRING" id="10116.ENSRNOP00000023383"/>
<dbReference type="iPTMnet" id="Q80W92"/>
<dbReference type="PhosphoSitePlus" id="Q80W92"/>
<dbReference type="jPOST" id="Q80W92"/>
<dbReference type="PaxDb" id="10116-ENSRNOP00000023383"/>
<dbReference type="Ensembl" id="ENSRNOT00000023383.6">
    <property type="protein sequence ID" value="ENSRNOP00000023383.4"/>
    <property type="gene ID" value="ENSRNOG00000017219.6"/>
</dbReference>
<dbReference type="GeneID" id="307842"/>
<dbReference type="KEGG" id="rno:307842"/>
<dbReference type="UCSC" id="RGD:631410">
    <property type="organism name" value="rat"/>
</dbReference>
<dbReference type="AGR" id="RGD:631410"/>
<dbReference type="CTD" id="55697"/>
<dbReference type="RGD" id="631410">
    <property type="gene designation" value="Vac14"/>
</dbReference>
<dbReference type="eggNOG" id="KOG0212">
    <property type="taxonomic scope" value="Eukaryota"/>
</dbReference>
<dbReference type="GeneTree" id="ENSGT00390000008385"/>
<dbReference type="HOGENOM" id="CLU_007740_1_0_1"/>
<dbReference type="InParanoid" id="Q80W92"/>
<dbReference type="OMA" id="QCYQHVS"/>
<dbReference type="OrthoDB" id="5574975at2759"/>
<dbReference type="PhylomeDB" id="Q80W92"/>
<dbReference type="TreeFam" id="TF343690"/>
<dbReference type="Reactome" id="R-RNO-1660514">
    <property type="pathway name" value="Synthesis of PIPs at the Golgi membrane"/>
</dbReference>
<dbReference type="Reactome" id="R-RNO-1660516">
    <property type="pathway name" value="Synthesis of PIPs at the early endosome membrane"/>
</dbReference>
<dbReference type="Reactome" id="R-RNO-1660517">
    <property type="pathway name" value="Synthesis of PIPs at the late endosome membrane"/>
</dbReference>
<dbReference type="PRO" id="PR:Q80W92"/>
<dbReference type="Proteomes" id="UP000002494">
    <property type="component" value="Chromosome 19"/>
</dbReference>
<dbReference type="Bgee" id="ENSRNOG00000017219">
    <property type="expression patterns" value="Expressed in spleen and 19 other cell types or tissues"/>
</dbReference>
<dbReference type="ExpressionAtlas" id="Q80W92">
    <property type="expression patterns" value="baseline and differential"/>
</dbReference>
<dbReference type="GO" id="GO:0005829">
    <property type="term" value="C:cytosol"/>
    <property type="evidence" value="ECO:0007669"/>
    <property type="project" value="Ensembl"/>
</dbReference>
<dbReference type="GO" id="GO:0005783">
    <property type="term" value="C:endoplasmic reticulum"/>
    <property type="evidence" value="ECO:0007669"/>
    <property type="project" value="UniProtKB-KW"/>
</dbReference>
<dbReference type="GO" id="GO:0010008">
    <property type="term" value="C:endosome membrane"/>
    <property type="evidence" value="ECO:0000266"/>
    <property type="project" value="RGD"/>
</dbReference>
<dbReference type="GO" id="GO:0070772">
    <property type="term" value="C:PAS complex"/>
    <property type="evidence" value="ECO:0000318"/>
    <property type="project" value="GO_Central"/>
</dbReference>
<dbReference type="GO" id="GO:0098830">
    <property type="term" value="C:presynaptic endosome"/>
    <property type="evidence" value="ECO:0000266"/>
    <property type="project" value="RGD"/>
</dbReference>
<dbReference type="GO" id="GO:0042802">
    <property type="term" value="F:identical protein binding"/>
    <property type="evidence" value="ECO:0000266"/>
    <property type="project" value="RGD"/>
</dbReference>
<dbReference type="GO" id="GO:0006661">
    <property type="term" value="P:phosphatidylinositol biosynthetic process"/>
    <property type="evidence" value="ECO:0000318"/>
    <property type="project" value="GO_Central"/>
</dbReference>
<dbReference type="GO" id="GO:0099149">
    <property type="term" value="P:regulation of postsynaptic neurotransmitter receptor internalization"/>
    <property type="evidence" value="ECO:0000266"/>
    <property type="project" value="RGD"/>
</dbReference>
<dbReference type="FunFam" id="1.25.10.10:FF:000631">
    <property type="entry name" value="Vac14, PIKFYVE complex component"/>
    <property type="match status" value="1"/>
</dbReference>
<dbReference type="Gene3D" id="1.25.10.10">
    <property type="entry name" value="Leucine-rich Repeat Variant"/>
    <property type="match status" value="3"/>
</dbReference>
<dbReference type="InterPro" id="IPR011989">
    <property type="entry name" value="ARM-like"/>
</dbReference>
<dbReference type="InterPro" id="IPR016024">
    <property type="entry name" value="ARM-type_fold"/>
</dbReference>
<dbReference type="InterPro" id="IPR026825">
    <property type="entry name" value="Vac14"/>
</dbReference>
<dbReference type="InterPro" id="IPR021841">
    <property type="entry name" value="VAC14_Fig4p-bd"/>
</dbReference>
<dbReference type="PANTHER" id="PTHR16023:SF0">
    <property type="entry name" value="PROTEIN VAC14 HOMOLOG"/>
    <property type="match status" value="1"/>
</dbReference>
<dbReference type="PANTHER" id="PTHR16023">
    <property type="entry name" value="TAX1 BINDING PROTEIN-RELATED"/>
    <property type="match status" value="1"/>
</dbReference>
<dbReference type="Pfam" id="PF12755">
    <property type="entry name" value="Vac14_Fab1_bd"/>
    <property type="match status" value="1"/>
</dbReference>
<dbReference type="Pfam" id="PF11916">
    <property type="entry name" value="Vac14_Fig4_bd"/>
    <property type="match status" value="1"/>
</dbReference>
<dbReference type="SUPFAM" id="SSF48371">
    <property type="entry name" value="ARM repeat"/>
    <property type="match status" value="1"/>
</dbReference>
<keyword id="KW-0007">Acetylation</keyword>
<keyword id="KW-0256">Endoplasmic reticulum</keyword>
<keyword id="KW-0967">Endosome</keyword>
<keyword id="KW-0472">Membrane</keyword>
<keyword id="KW-0492">Microsome</keyword>
<keyword id="KW-0597">Phosphoprotein</keyword>
<keyword id="KW-1185">Reference proteome</keyword>
<keyword id="KW-0677">Repeat</keyword>
<reference key="1">
    <citation type="journal article" date="2003" name="Hum. Mol. Genet.">
        <title>Congenital hydrocephalus in hy3 mice is caused by a frameshift mutation in Hydin, a large novel gene.</title>
        <authorList>
            <person name="Davy B.E."/>
            <person name="Robinson M.L."/>
        </authorList>
    </citation>
    <scope>NUCLEOTIDE SEQUENCE [MRNA]</scope>
    <source>
        <tissue>Brain</tissue>
    </source>
</reference>
<reference key="2">
    <citation type="journal article" date="2006" name="FEBS Lett.">
        <title>Binding of Vac14 to neuronal nitric oxide synthase: Characterisation of a new internal PDZ-recognition motif.</title>
        <authorList>
            <person name="Lemaire J.F."/>
            <person name="McPherson P.S."/>
        </authorList>
    </citation>
    <scope>INTERACTION WITH NOS1</scope>
    <scope>SUBCELLULAR LOCATION</scope>
    <scope>TISSUE SPECIFICITY</scope>
    <scope>DEVELOPMENTAL STAGE</scope>
    <scope>MUTAGENESIS OF 781-VAL--LEU-783</scope>
</reference>
<comment type="function">
    <text evidence="1">Scaffold protein component of the PI(3,5)P2 regulatory complex which regulates both the synthesis and turnover of phosphatidylinositol 3,5-bisphosphate (PtdIns(3,5)P2). Pentamerizes into a star-shaped structure and nucleates the assembly of the complex. The pentamer binds a single copy each of PIKFYVE and FIG4 and coordinates both PIKfyve kinase activity and FIG4 phosphatase activity, being required to maintain normal levels of phosphatidylinositol 3-phosphate (PtdIns(3)P) and phosphatidylinositol 5-phosphate (PtdIns(5)P). Plays a role in the biogenesis of endosome carrier vesicles (ECV) / multivesicular bodies (MVB) transport intermediates from early endosomes.</text>
</comment>
<comment type="subunit">
    <text evidence="1 3">Forms pentamers. Component of the PI(3,5)P2 regulatory complex/PAS complex, at least composed of PIKFYVE, FIG4 and VAC14. VAC14 nucleates the assembly of the complex and serves as a scaffold by pentamerizing into a star-shaped structure, which can bind a single copy each of PIKFYVE and FIG4 and coordinates their activities (By similarity). Interacts with NOS1 (PubMed:17161399).</text>
</comment>
<comment type="subcellular location">
    <subcellularLocation>
        <location evidence="1">Endosome membrane</location>
    </subcellularLocation>
    <subcellularLocation>
        <location evidence="3">Microsome membrane</location>
    </subcellularLocation>
    <text evidence="1">Mainly associated with membranes of the late endocytic pathway.</text>
</comment>
<comment type="tissue specificity">
    <text evidence="3">Expressed in brain, lung, kidney and testis with highest levels in brain and testis.</text>
</comment>
<comment type="developmental stage">
    <text evidence="3">Expressed in embryonic brain.</text>
</comment>
<comment type="domain">
    <text evidence="1">The C-terminal domain (residues 523-782) mediates pentameric interactions and is necessary for the formation and maintenance of the PI(3,5)P2 regulatory complex.</text>
</comment>
<comment type="similarity">
    <text evidence="4">Belongs to the VAC14 family.</text>
</comment>
<protein>
    <recommendedName>
        <fullName>Protein VAC14 homolog</fullName>
    </recommendedName>
</protein>
<organism>
    <name type="scientific">Rattus norvegicus</name>
    <name type="common">Rat</name>
    <dbReference type="NCBI Taxonomy" id="10116"/>
    <lineage>
        <taxon>Eukaryota</taxon>
        <taxon>Metazoa</taxon>
        <taxon>Chordata</taxon>
        <taxon>Craniata</taxon>
        <taxon>Vertebrata</taxon>
        <taxon>Euteleostomi</taxon>
        <taxon>Mammalia</taxon>
        <taxon>Eutheria</taxon>
        <taxon>Euarchontoglires</taxon>
        <taxon>Glires</taxon>
        <taxon>Rodentia</taxon>
        <taxon>Myomorpha</taxon>
        <taxon>Muroidea</taxon>
        <taxon>Muridae</taxon>
        <taxon>Murinae</taxon>
        <taxon>Rattus</taxon>
    </lineage>
</organism>
<accession>Q80W92</accession>
<proteinExistence type="evidence at protein level"/>
<feature type="chain" id="PRO_0000300487" description="Protein VAC14 homolog">
    <location>
        <begin position="1"/>
        <end position="783"/>
    </location>
</feature>
<feature type="repeat" description="HEAT 1">
    <location>
        <begin position="5"/>
        <end position="42"/>
    </location>
</feature>
<feature type="repeat" description="HEAT 2">
    <location>
        <begin position="89"/>
        <end position="126"/>
    </location>
</feature>
<feature type="repeat" description="HEAT 3">
    <location>
        <begin position="171"/>
        <end position="208"/>
    </location>
</feature>
<feature type="repeat" description="HEAT 4">
    <location>
        <begin position="212"/>
        <end position="249"/>
    </location>
</feature>
<feature type="repeat" description="HEAT 5">
    <location>
        <begin position="439"/>
        <end position="476"/>
    </location>
</feature>
<feature type="repeat" description="HEAT 6">
    <location>
        <begin position="561"/>
        <end position="599"/>
    </location>
</feature>
<feature type="region of interest" description="Disordered" evidence="2">
    <location>
        <begin position="331"/>
        <end position="372"/>
    </location>
</feature>
<feature type="region of interest" description="Mediates interaction with the PDZ domain of NOS1">
    <location>
        <begin position="774"/>
        <end position="778"/>
    </location>
</feature>
<feature type="modified residue" description="N-acetylmethionine" evidence="1">
    <location>
        <position position="1"/>
    </location>
</feature>
<feature type="modified residue" description="Phosphothreonine" evidence="1">
    <location>
        <position position="11"/>
    </location>
</feature>
<feature type="modified residue" description="Phosphothreonine" evidence="1">
    <location>
        <position position="500"/>
    </location>
</feature>
<feature type="modified residue" description="Phosphoserine" evidence="1">
    <location>
        <position position="518"/>
    </location>
</feature>
<feature type="modified residue" description="Phosphoserine" evidence="1">
    <location>
        <position position="744"/>
    </location>
</feature>
<feature type="mutagenesis site" description="Reduced interaction with NOS1." evidence="3">
    <original>VVL</original>
    <variation>AAA</variation>
    <location>
        <begin position="781"/>
        <end position="783"/>
    </location>
</feature>